<keyword id="KW-0028">Amino-acid biosynthesis</keyword>
<keyword id="KW-0067">ATP-binding</keyword>
<keyword id="KW-0963">Cytoplasm</keyword>
<keyword id="KW-0328">Glycosyltransferase</keyword>
<keyword id="KW-0368">Histidine biosynthesis</keyword>
<keyword id="KW-0460">Magnesium</keyword>
<keyword id="KW-0479">Metal-binding</keyword>
<keyword id="KW-0547">Nucleotide-binding</keyword>
<keyword id="KW-1185">Reference proteome</keyword>
<keyword id="KW-0808">Transferase</keyword>
<proteinExistence type="inferred from homology"/>
<name>HIS1_XANOR</name>
<dbReference type="EC" id="2.4.2.17" evidence="1"/>
<dbReference type="EMBL" id="AE013598">
    <property type="protein sequence ID" value="AAW75509.1"/>
    <property type="molecule type" value="Genomic_DNA"/>
</dbReference>
<dbReference type="SMR" id="Q5H0L2"/>
<dbReference type="STRING" id="291331.XOO2255"/>
<dbReference type="KEGG" id="xoo:XOO2255"/>
<dbReference type="HOGENOM" id="CLU_038115_1_0_6"/>
<dbReference type="UniPathway" id="UPA00031">
    <property type="reaction ID" value="UER00006"/>
</dbReference>
<dbReference type="Proteomes" id="UP000006735">
    <property type="component" value="Chromosome"/>
</dbReference>
<dbReference type="GO" id="GO:0005737">
    <property type="term" value="C:cytoplasm"/>
    <property type="evidence" value="ECO:0007669"/>
    <property type="project" value="UniProtKB-SubCell"/>
</dbReference>
<dbReference type="GO" id="GO:0005524">
    <property type="term" value="F:ATP binding"/>
    <property type="evidence" value="ECO:0007669"/>
    <property type="project" value="UniProtKB-KW"/>
</dbReference>
<dbReference type="GO" id="GO:0003879">
    <property type="term" value="F:ATP phosphoribosyltransferase activity"/>
    <property type="evidence" value="ECO:0007669"/>
    <property type="project" value="UniProtKB-UniRule"/>
</dbReference>
<dbReference type="GO" id="GO:0000287">
    <property type="term" value="F:magnesium ion binding"/>
    <property type="evidence" value="ECO:0007669"/>
    <property type="project" value="UniProtKB-UniRule"/>
</dbReference>
<dbReference type="GO" id="GO:0000105">
    <property type="term" value="P:L-histidine biosynthetic process"/>
    <property type="evidence" value="ECO:0007669"/>
    <property type="project" value="UniProtKB-UniRule"/>
</dbReference>
<dbReference type="CDD" id="cd13592">
    <property type="entry name" value="PBP2_HisGL2"/>
    <property type="match status" value="1"/>
</dbReference>
<dbReference type="FunFam" id="3.40.190.10:FF:000008">
    <property type="entry name" value="ATP phosphoribosyltransferase"/>
    <property type="match status" value="1"/>
</dbReference>
<dbReference type="Gene3D" id="3.30.70.120">
    <property type="match status" value="1"/>
</dbReference>
<dbReference type="Gene3D" id="3.40.190.10">
    <property type="entry name" value="Periplasmic binding protein-like II"/>
    <property type="match status" value="2"/>
</dbReference>
<dbReference type="HAMAP" id="MF_00079">
    <property type="entry name" value="HisG_Long"/>
    <property type="match status" value="1"/>
</dbReference>
<dbReference type="InterPro" id="IPR020621">
    <property type="entry name" value="ATP-PRT_HisG_long"/>
</dbReference>
<dbReference type="InterPro" id="IPR013820">
    <property type="entry name" value="ATP_PRibTrfase_cat"/>
</dbReference>
<dbReference type="InterPro" id="IPR018198">
    <property type="entry name" value="ATP_PRibTrfase_CS"/>
</dbReference>
<dbReference type="InterPro" id="IPR001348">
    <property type="entry name" value="ATP_PRibTrfase_HisG"/>
</dbReference>
<dbReference type="InterPro" id="IPR013115">
    <property type="entry name" value="HisG_C"/>
</dbReference>
<dbReference type="InterPro" id="IPR015867">
    <property type="entry name" value="N-reg_PII/ATP_PRibTrfase_C"/>
</dbReference>
<dbReference type="NCBIfam" id="TIGR00070">
    <property type="entry name" value="hisG"/>
    <property type="match status" value="1"/>
</dbReference>
<dbReference type="NCBIfam" id="TIGR03455">
    <property type="entry name" value="HisG_C-term"/>
    <property type="match status" value="1"/>
</dbReference>
<dbReference type="PANTHER" id="PTHR21403:SF8">
    <property type="entry name" value="ATP PHOSPHORIBOSYLTRANSFERASE"/>
    <property type="match status" value="1"/>
</dbReference>
<dbReference type="PANTHER" id="PTHR21403">
    <property type="entry name" value="ATP PHOSPHORIBOSYLTRANSFERASE ATP-PRTASE"/>
    <property type="match status" value="1"/>
</dbReference>
<dbReference type="Pfam" id="PF01634">
    <property type="entry name" value="HisG"/>
    <property type="match status" value="1"/>
</dbReference>
<dbReference type="Pfam" id="PF08029">
    <property type="entry name" value="HisG_C"/>
    <property type="match status" value="1"/>
</dbReference>
<dbReference type="SUPFAM" id="SSF53850">
    <property type="entry name" value="Periplasmic binding protein-like II"/>
    <property type="match status" value="1"/>
</dbReference>
<dbReference type="PROSITE" id="PS01316">
    <property type="entry name" value="ATP_P_PHORIBOSYLTR"/>
    <property type="match status" value="1"/>
</dbReference>
<protein>
    <recommendedName>
        <fullName evidence="1">ATP phosphoribosyltransferase</fullName>
        <shortName evidence="1">ATP-PRT</shortName>
        <shortName evidence="1">ATP-PRTase</shortName>
        <ecNumber evidence="1">2.4.2.17</ecNumber>
    </recommendedName>
</protein>
<sequence>MSASTAAPARDRLRIAIQKSGRLAEPARSLLAACGLSWRQSRDKLFCYGESLPVDLLLVRDDDIPGLIADGVCDLGIVGQNELEEQAAERRGNGLPAAYHAVRGVGFGQCRLMLAVPEEWDWQGVAQLAGKRIATSYPAILADWLERQGIEATVVELSGSVEIAPRLGTADLICDLVSSGATLAANQLKPVELVMESEAVLAGAVREPADARAGLLAMLLRRMDGVLKLRDSKLLMFRADQDNVDALRRLLPDADPLVQLPDDGNGVLRLQTMCHGAVTWQRLEELERAGAQGLMVLTVERSLA</sequence>
<reference key="1">
    <citation type="journal article" date="2005" name="Nucleic Acids Res.">
        <title>The genome sequence of Xanthomonas oryzae pathovar oryzae KACC10331, the bacterial blight pathogen of rice.</title>
        <authorList>
            <person name="Lee B.-M."/>
            <person name="Park Y.-J."/>
            <person name="Park D.-S."/>
            <person name="Kang H.-W."/>
            <person name="Kim J.-G."/>
            <person name="Song E.-S."/>
            <person name="Park I.-C."/>
            <person name="Yoon U.-H."/>
            <person name="Hahn J.-H."/>
            <person name="Koo B.-S."/>
            <person name="Lee G.-B."/>
            <person name="Kim H."/>
            <person name="Park H.-S."/>
            <person name="Yoon K.-O."/>
            <person name="Kim J.-H."/>
            <person name="Jung C.-H."/>
            <person name="Koh N.-H."/>
            <person name="Seo J.-S."/>
            <person name="Go S.-J."/>
        </authorList>
    </citation>
    <scope>NUCLEOTIDE SEQUENCE [LARGE SCALE GENOMIC DNA]</scope>
    <source>
        <strain>KACC10331 / KXO85</strain>
    </source>
</reference>
<comment type="function">
    <text evidence="1">Catalyzes the condensation of ATP and 5-phosphoribose 1-diphosphate to form N'-(5'-phosphoribosyl)-ATP (PR-ATP). Has a crucial role in the pathway because the rate of histidine biosynthesis seems to be controlled primarily by regulation of HisG enzymatic activity.</text>
</comment>
<comment type="catalytic activity">
    <reaction evidence="1">
        <text>1-(5-phospho-beta-D-ribosyl)-ATP + diphosphate = 5-phospho-alpha-D-ribose 1-diphosphate + ATP</text>
        <dbReference type="Rhea" id="RHEA:18473"/>
        <dbReference type="ChEBI" id="CHEBI:30616"/>
        <dbReference type="ChEBI" id="CHEBI:33019"/>
        <dbReference type="ChEBI" id="CHEBI:58017"/>
        <dbReference type="ChEBI" id="CHEBI:73183"/>
        <dbReference type="EC" id="2.4.2.17"/>
    </reaction>
</comment>
<comment type="cofactor">
    <cofactor evidence="1">
        <name>Mg(2+)</name>
        <dbReference type="ChEBI" id="CHEBI:18420"/>
    </cofactor>
</comment>
<comment type="activity regulation">
    <text evidence="1">Feedback inhibited by histidine.</text>
</comment>
<comment type="pathway">
    <text evidence="1">Amino-acid biosynthesis; L-histidine biosynthesis; L-histidine from 5-phospho-alpha-D-ribose 1-diphosphate: step 1/9.</text>
</comment>
<comment type="subcellular location">
    <subcellularLocation>
        <location evidence="1">Cytoplasm</location>
    </subcellularLocation>
</comment>
<comment type="similarity">
    <text evidence="1">Belongs to the ATP phosphoribosyltransferase family. Long subfamily.</text>
</comment>
<feature type="chain" id="PRO_1000004517" description="ATP phosphoribosyltransferase">
    <location>
        <begin position="1"/>
        <end position="304"/>
    </location>
</feature>
<evidence type="ECO:0000255" key="1">
    <source>
        <dbReference type="HAMAP-Rule" id="MF_00079"/>
    </source>
</evidence>
<organism>
    <name type="scientific">Xanthomonas oryzae pv. oryzae (strain KACC10331 / KXO85)</name>
    <dbReference type="NCBI Taxonomy" id="291331"/>
    <lineage>
        <taxon>Bacteria</taxon>
        <taxon>Pseudomonadati</taxon>
        <taxon>Pseudomonadota</taxon>
        <taxon>Gammaproteobacteria</taxon>
        <taxon>Lysobacterales</taxon>
        <taxon>Lysobacteraceae</taxon>
        <taxon>Xanthomonas</taxon>
    </lineage>
</organism>
<accession>Q5H0L2</accession>
<gene>
    <name evidence="1" type="primary">hisG</name>
    <name type="ordered locus">XOO2255</name>
</gene>